<accession>P95992</accession>
<protein>
    <recommendedName>
        <fullName evidence="1">Small ribosomal subunit protein uS9</fullName>
    </recommendedName>
    <alternativeName>
        <fullName>30S ribosomal protein S9</fullName>
    </alternativeName>
</protein>
<name>RS9_SACS2</name>
<evidence type="ECO:0000305" key="1"/>
<reference key="1">
    <citation type="journal article" date="1996" name="Mol. Microbiol.">
        <title>Organizational characteristics and information content of an archaeal genome: 156 kb of sequence from Sulfolobus solfataricus P2.</title>
        <authorList>
            <person name="Sensen C.W."/>
            <person name="Klenk H.-P."/>
            <person name="Singh R.K."/>
            <person name="Allard G."/>
            <person name="Chan C.C.-Y."/>
            <person name="Liu Q.Y."/>
            <person name="Penny S.L."/>
            <person name="Young F."/>
            <person name="Schenk M.E."/>
            <person name="Gaasterland T."/>
            <person name="Doolittle W.F."/>
            <person name="Ragan M.A."/>
            <person name="Charlebois R.L."/>
        </authorList>
    </citation>
    <scope>NUCLEOTIDE SEQUENCE [GENOMIC DNA]</scope>
    <source>
        <strain>ATCC 35092 / DSM 1617 / JCM 11322 / P2</strain>
    </source>
</reference>
<reference key="2">
    <citation type="journal article" date="2001" name="Proc. Natl. Acad. Sci. U.S.A.">
        <title>The complete genome of the crenarchaeon Sulfolobus solfataricus P2.</title>
        <authorList>
            <person name="She Q."/>
            <person name="Singh R.K."/>
            <person name="Confalonieri F."/>
            <person name="Zivanovic Y."/>
            <person name="Allard G."/>
            <person name="Awayez M.J."/>
            <person name="Chan-Weiher C.C.-Y."/>
            <person name="Clausen I.G."/>
            <person name="Curtis B.A."/>
            <person name="De Moors A."/>
            <person name="Erauso G."/>
            <person name="Fletcher C."/>
            <person name="Gordon P.M.K."/>
            <person name="Heikamp-de Jong I."/>
            <person name="Jeffries A.C."/>
            <person name="Kozera C.J."/>
            <person name="Medina N."/>
            <person name="Peng X."/>
            <person name="Thi-Ngoc H.P."/>
            <person name="Redder P."/>
            <person name="Schenk M.E."/>
            <person name="Theriault C."/>
            <person name="Tolstrup N."/>
            <person name="Charlebois R.L."/>
            <person name="Doolittle W.F."/>
            <person name="Duguet M."/>
            <person name="Gaasterland T."/>
            <person name="Garrett R.A."/>
            <person name="Ragan M.A."/>
            <person name="Sensen C.W."/>
            <person name="Van der Oost J."/>
        </authorList>
    </citation>
    <scope>NUCLEOTIDE SEQUENCE [LARGE SCALE GENOMIC DNA]</scope>
    <source>
        <strain>ATCC 35092 / DSM 1617 / JCM 11322 / P2</strain>
    </source>
</reference>
<keyword id="KW-0002">3D-structure</keyword>
<keyword id="KW-1185">Reference proteome</keyword>
<keyword id="KW-0687">Ribonucleoprotein</keyword>
<keyword id="KW-0689">Ribosomal protein</keyword>
<gene>
    <name type="primary">rps9</name>
    <name type="synonym">rps9Ab</name>
    <name type="ordered locus">SSO0068</name>
    <name type="ORF">C05003</name>
</gene>
<comment type="similarity">
    <text evidence="1">Belongs to the universal ribosomal protein uS9 family.</text>
</comment>
<comment type="sequence caution" evidence="1">
    <conflict type="erroneous initiation">
        <sequence resource="EMBL-CDS" id="AAK40430"/>
    </conflict>
    <text>Extended N-terminus.</text>
</comment>
<comment type="sequence caution" evidence="1">
    <conflict type="erroneous initiation">
        <sequence resource="EMBL-CDS" id="CAA69534"/>
    </conflict>
    <text>Extended N-terminus.</text>
</comment>
<organism>
    <name type="scientific">Saccharolobus solfataricus (strain ATCC 35092 / DSM 1617 / JCM 11322 / P2)</name>
    <name type="common">Sulfolobus solfataricus</name>
    <dbReference type="NCBI Taxonomy" id="273057"/>
    <lineage>
        <taxon>Archaea</taxon>
        <taxon>Thermoproteota</taxon>
        <taxon>Thermoprotei</taxon>
        <taxon>Sulfolobales</taxon>
        <taxon>Sulfolobaceae</taxon>
        <taxon>Saccharolobus</taxon>
    </lineage>
</organism>
<feature type="chain" id="PRO_0000111475" description="Small ribosomal subunit protein uS9">
    <location>
        <begin position="1"/>
        <end position="137"/>
    </location>
</feature>
<sequence>MSEEQKLVISSARRKTARATCYIYAGKGRVFVNNVPIELIPIEMVRLKIMEPLLLAGNDIRSKIDAKIITYGGGIMGQADAARMALARALVKFTGSKELEKIYRAYDRTMLAGDPRQTESEKWMRYSARRWRQKSYR</sequence>
<dbReference type="EMBL" id="Y08257">
    <property type="protein sequence ID" value="CAA69534.1"/>
    <property type="status" value="ALT_INIT"/>
    <property type="molecule type" value="Genomic_DNA"/>
</dbReference>
<dbReference type="EMBL" id="AE006641">
    <property type="protein sequence ID" value="AAK40430.1"/>
    <property type="status" value="ALT_INIT"/>
    <property type="molecule type" value="Genomic_DNA"/>
</dbReference>
<dbReference type="PIR" id="S75420">
    <property type="entry name" value="S75420"/>
</dbReference>
<dbReference type="RefSeq" id="WP_009988877.1">
    <property type="nucleotide sequence ID" value="NC_002754.1"/>
</dbReference>
<dbReference type="PDB" id="9FHL">
    <property type="method" value="EM"/>
    <property type="resolution" value="2.50 A"/>
    <property type="chains" value="K=1-137"/>
</dbReference>
<dbReference type="PDB" id="9FRA">
    <property type="method" value="EM"/>
    <property type="resolution" value="2.80 A"/>
    <property type="chains" value="K=1-137"/>
</dbReference>
<dbReference type="PDB" id="9FRK">
    <property type="method" value="EM"/>
    <property type="resolution" value="3.00 A"/>
    <property type="chains" value="K=1-137"/>
</dbReference>
<dbReference type="PDB" id="9FRL">
    <property type="method" value="EM"/>
    <property type="resolution" value="2.97 A"/>
    <property type="chains" value="K=1-137"/>
</dbReference>
<dbReference type="PDB" id="9FS6">
    <property type="method" value="EM"/>
    <property type="resolution" value="2.90 A"/>
    <property type="chains" value="K=1-137"/>
</dbReference>
<dbReference type="PDB" id="9FS8">
    <property type="method" value="EM"/>
    <property type="resolution" value="3.70 A"/>
    <property type="chains" value="K=1-137"/>
</dbReference>
<dbReference type="PDB" id="9FSF">
    <property type="method" value="EM"/>
    <property type="resolution" value="2.80 A"/>
    <property type="chains" value="K=1-137"/>
</dbReference>
<dbReference type="PDB" id="9FY0">
    <property type="method" value="EM"/>
    <property type="resolution" value="2.90 A"/>
    <property type="chains" value="K=1-137"/>
</dbReference>
<dbReference type="PDBsum" id="9FHL"/>
<dbReference type="PDBsum" id="9FRA"/>
<dbReference type="PDBsum" id="9FRK"/>
<dbReference type="PDBsum" id="9FRL"/>
<dbReference type="PDBsum" id="9FS6"/>
<dbReference type="PDBsum" id="9FS8"/>
<dbReference type="PDBsum" id="9FSF"/>
<dbReference type="PDBsum" id="9FY0"/>
<dbReference type="EMDB" id="EMD-50445"/>
<dbReference type="EMDB" id="EMD-50709"/>
<dbReference type="EMDB" id="EMD-50716"/>
<dbReference type="EMDB" id="EMD-50717"/>
<dbReference type="EMDB" id="EMD-50724"/>
<dbReference type="EMDB" id="EMD-50725"/>
<dbReference type="EMDB" id="EMD-50727"/>
<dbReference type="EMDB" id="EMD-50854"/>
<dbReference type="SMR" id="P95992"/>
<dbReference type="FunCoup" id="P95992">
    <property type="interactions" value="144"/>
</dbReference>
<dbReference type="STRING" id="273057.SSO0068"/>
<dbReference type="PaxDb" id="273057-SSO0068"/>
<dbReference type="EnsemblBacteria" id="AAK40430">
    <property type="protein sequence ID" value="AAK40430"/>
    <property type="gene ID" value="SSO0068"/>
</dbReference>
<dbReference type="KEGG" id="sso:SSO0068"/>
<dbReference type="PATRIC" id="fig|273057.12.peg.69"/>
<dbReference type="eggNOG" id="arCOG04243">
    <property type="taxonomic scope" value="Archaea"/>
</dbReference>
<dbReference type="HOGENOM" id="CLU_046483_4_0_2"/>
<dbReference type="InParanoid" id="P95992"/>
<dbReference type="PhylomeDB" id="P95992"/>
<dbReference type="Proteomes" id="UP000001974">
    <property type="component" value="Chromosome"/>
</dbReference>
<dbReference type="GO" id="GO:0022627">
    <property type="term" value="C:cytosolic small ribosomal subunit"/>
    <property type="evidence" value="ECO:0000318"/>
    <property type="project" value="GO_Central"/>
</dbReference>
<dbReference type="GO" id="GO:0003723">
    <property type="term" value="F:RNA binding"/>
    <property type="evidence" value="ECO:0000318"/>
    <property type="project" value="GO_Central"/>
</dbReference>
<dbReference type="GO" id="GO:0003735">
    <property type="term" value="F:structural constituent of ribosome"/>
    <property type="evidence" value="ECO:0000318"/>
    <property type="project" value="GO_Central"/>
</dbReference>
<dbReference type="GO" id="GO:0000462">
    <property type="term" value="P:maturation of SSU-rRNA from tricistronic rRNA transcript (SSU-rRNA, 5.8S rRNA, LSU-rRNA)"/>
    <property type="evidence" value="ECO:0000318"/>
    <property type="project" value="GO_Central"/>
</dbReference>
<dbReference type="GO" id="GO:0006412">
    <property type="term" value="P:translation"/>
    <property type="evidence" value="ECO:0007669"/>
    <property type="project" value="UniProtKB-UniRule"/>
</dbReference>
<dbReference type="FunFam" id="3.30.230.10:FF:000051">
    <property type="entry name" value="30S ribosomal protein S9"/>
    <property type="match status" value="1"/>
</dbReference>
<dbReference type="Gene3D" id="3.30.230.10">
    <property type="match status" value="1"/>
</dbReference>
<dbReference type="HAMAP" id="MF_00532_A">
    <property type="entry name" value="Ribosomal_uS9_A"/>
    <property type="match status" value="1"/>
</dbReference>
<dbReference type="InterPro" id="IPR020568">
    <property type="entry name" value="Ribosomal_Su5_D2-typ_SF"/>
</dbReference>
<dbReference type="InterPro" id="IPR000754">
    <property type="entry name" value="Ribosomal_uS9"/>
</dbReference>
<dbReference type="InterPro" id="IPR019958">
    <property type="entry name" value="Ribosomal_uS9_archaeal"/>
</dbReference>
<dbReference type="InterPro" id="IPR020574">
    <property type="entry name" value="Ribosomal_uS9_CS"/>
</dbReference>
<dbReference type="InterPro" id="IPR014721">
    <property type="entry name" value="Ribsml_uS5_D2-typ_fold_subgr"/>
</dbReference>
<dbReference type="NCBIfam" id="NF001749">
    <property type="entry name" value="PRK00474.1"/>
    <property type="match status" value="1"/>
</dbReference>
<dbReference type="NCBIfam" id="TIGR03627">
    <property type="entry name" value="uS9_arch"/>
    <property type="match status" value="1"/>
</dbReference>
<dbReference type="PANTHER" id="PTHR21569:SF16">
    <property type="entry name" value="RIBOSOMAL PROTEIN S16"/>
    <property type="match status" value="1"/>
</dbReference>
<dbReference type="PANTHER" id="PTHR21569">
    <property type="entry name" value="RIBOSOMAL PROTEIN S9"/>
    <property type="match status" value="1"/>
</dbReference>
<dbReference type="Pfam" id="PF00380">
    <property type="entry name" value="Ribosomal_S9"/>
    <property type="match status" value="1"/>
</dbReference>
<dbReference type="SUPFAM" id="SSF54211">
    <property type="entry name" value="Ribosomal protein S5 domain 2-like"/>
    <property type="match status" value="1"/>
</dbReference>
<dbReference type="PROSITE" id="PS00360">
    <property type="entry name" value="RIBOSOMAL_S9"/>
    <property type="match status" value="1"/>
</dbReference>
<proteinExistence type="evidence at protein level"/>